<keyword id="KW-0255">Endonuclease</keyword>
<keyword id="KW-0378">Hydrolase</keyword>
<keyword id="KW-0540">Nuclease</keyword>
<keyword id="KW-1185">Reference proteome</keyword>
<keyword id="KW-0694">RNA-binding</keyword>
<keyword id="KW-0819">tRNA processing</keyword>
<name>RNPA_SHEAM</name>
<accession>A1S1G7</accession>
<dbReference type="EC" id="3.1.26.5" evidence="1"/>
<dbReference type="EMBL" id="CP000507">
    <property type="protein sequence ID" value="ABL98223.1"/>
    <property type="molecule type" value="Genomic_DNA"/>
</dbReference>
<dbReference type="RefSeq" id="WP_011758134.1">
    <property type="nucleotide sequence ID" value="NC_008700.1"/>
</dbReference>
<dbReference type="SMR" id="A1S1G7"/>
<dbReference type="STRING" id="326297.Sama_0011"/>
<dbReference type="KEGG" id="saz:Sama_0011"/>
<dbReference type="eggNOG" id="COG0594">
    <property type="taxonomic scope" value="Bacteria"/>
</dbReference>
<dbReference type="HOGENOM" id="CLU_117179_11_0_6"/>
<dbReference type="OrthoDB" id="9796422at2"/>
<dbReference type="Proteomes" id="UP000009175">
    <property type="component" value="Chromosome"/>
</dbReference>
<dbReference type="GO" id="GO:0030677">
    <property type="term" value="C:ribonuclease P complex"/>
    <property type="evidence" value="ECO:0007669"/>
    <property type="project" value="TreeGrafter"/>
</dbReference>
<dbReference type="GO" id="GO:0042781">
    <property type="term" value="F:3'-tRNA processing endoribonuclease activity"/>
    <property type="evidence" value="ECO:0007669"/>
    <property type="project" value="TreeGrafter"/>
</dbReference>
<dbReference type="GO" id="GO:0004526">
    <property type="term" value="F:ribonuclease P activity"/>
    <property type="evidence" value="ECO:0007669"/>
    <property type="project" value="UniProtKB-UniRule"/>
</dbReference>
<dbReference type="GO" id="GO:0000049">
    <property type="term" value="F:tRNA binding"/>
    <property type="evidence" value="ECO:0007669"/>
    <property type="project" value="UniProtKB-UniRule"/>
</dbReference>
<dbReference type="GO" id="GO:0001682">
    <property type="term" value="P:tRNA 5'-leader removal"/>
    <property type="evidence" value="ECO:0007669"/>
    <property type="project" value="UniProtKB-UniRule"/>
</dbReference>
<dbReference type="FunFam" id="3.30.230.10:FF:000016">
    <property type="entry name" value="Ribonuclease P protein component"/>
    <property type="match status" value="1"/>
</dbReference>
<dbReference type="Gene3D" id="3.30.230.10">
    <property type="match status" value="1"/>
</dbReference>
<dbReference type="HAMAP" id="MF_00227">
    <property type="entry name" value="RNase_P"/>
    <property type="match status" value="1"/>
</dbReference>
<dbReference type="InterPro" id="IPR020568">
    <property type="entry name" value="Ribosomal_Su5_D2-typ_SF"/>
</dbReference>
<dbReference type="InterPro" id="IPR014721">
    <property type="entry name" value="Ribsml_uS5_D2-typ_fold_subgr"/>
</dbReference>
<dbReference type="InterPro" id="IPR000100">
    <property type="entry name" value="RNase_P"/>
</dbReference>
<dbReference type="InterPro" id="IPR020539">
    <property type="entry name" value="RNase_P_CS"/>
</dbReference>
<dbReference type="NCBIfam" id="TIGR00188">
    <property type="entry name" value="rnpA"/>
    <property type="match status" value="1"/>
</dbReference>
<dbReference type="PANTHER" id="PTHR33992">
    <property type="entry name" value="RIBONUCLEASE P PROTEIN COMPONENT"/>
    <property type="match status" value="1"/>
</dbReference>
<dbReference type="PANTHER" id="PTHR33992:SF1">
    <property type="entry name" value="RIBONUCLEASE P PROTEIN COMPONENT"/>
    <property type="match status" value="1"/>
</dbReference>
<dbReference type="Pfam" id="PF00825">
    <property type="entry name" value="Ribonuclease_P"/>
    <property type="match status" value="1"/>
</dbReference>
<dbReference type="SUPFAM" id="SSF54211">
    <property type="entry name" value="Ribosomal protein S5 domain 2-like"/>
    <property type="match status" value="1"/>
</dbReference>
<dbReference type="PROSITE" id="PS00648">
    <property type="entry name" value="RIBONUCLEASE_P"/>
    <property type="match status" value="1"/>
</dbReference>
<evidence type="ECO:0000255" key="1">
    <source>
        <dbReference type="HAMAP-Rule" id="MF_00227"/>
    </source>
</evidence>
<comment type="function">
    <text evidence="1">RNaseP catalyzes the removal of the 5'-leader sequence from pre-tRNA to produce the mature 5'-terminus. It can also cleave other RNA substrates such as 4.5S RNA. The protein component plays an auxiliary but essential role in vivo by binding to the 5'-leader sequence and broadening the substrate specificity of the ribozyme.</text>
</comment>
<comment type="catalytic activity">
    <reaction evidence="1">
        <text>Endonucleolytic cleavage of RNA, removing 5'-extranucleotides from tRNA precursor.</text>
        <dbReference type="EC" id="3.1.26.5"/>
    </reaction>
</comment>
<comment type="subunit">
    <text evidence="1">Consists of a catalytic RNA component (M1 or rnpB) and a protein subunit.</text>
</comment>
<comment type="similarity">
    <text evidence="1">Belongs to the RnpA family.</text>
</comment>
<feature type="chain" id="PRO_1000021455" description="Ribonuclease P protein component">
    <location>
        <begin position="1"/>
        <end position="118"/>
    </location>
</feature>
<gene>
    <name evidence="1" type="primary">rnpA</name>
    <name type="ordered locus">Sama_0011</name>
</gene>
<sequence length="118" mass="13751">MTSYTFTRELRLLTPAQFQAVFTNPVKASSAEITLLATPNTQEHPRVGLTVPKKQVKRAHDRNRVKRVIRESFRMHQHDLPSLDIVVLVRKGVMDLENPELHKLVDKLWRKLSRRFNG</sequence>
<proteinExistence type="inferred from homology"/>
<organism>
    <name type="scientific">Shewanella amazonensis (strain ATCC BAA-1098 / SB2B)</name>
    <dbReference type="NCBI Taxonomy" id="326297"/>
    <lineage>
        <taxon>Bacteria</taxon>
        <taxon>Pseudomonadati</taxon>
        <taxon>Pseudomonadota</taxon>
        <taxon>Gammaproteobacteria</taxon>
        <taxon>Alteromonadales</taxon>
        <taxon>Shewanellaceae</taxon>
        <taxon>Shewanella</taxon>
    </lineage>
</organism>
<reference key="1">
    <citation type="submission" date="2006-12" db="EMBL/GenBank/DDBJ databases">
        <title>Complete sequence of Shewanella amazonensis SB2B.</title>
        <authorList>
            <consortium name="US DOE Joint Genome Institute"/>
            <person name="Copeland A."/>
            <person name="Lucas S."/>
            <person name="Lapidus A."/>
            <person name="Barry K."/>
            <person name="Detter J.C."/>
            <person name="Glavina del Rio T."/>
            <person name="Hammon N."/>
            <person name="Israni S."/>
            <person name="Dalin E."/>
            <person name="Tice H."/>
            <person name="Pitluck S."/>
            <person name="Munk A.C."/>
            <person name="Brettin T."/>
            <person name="Bruce D."/>
            <person name="Han C."/>
            <person name="Tapia R."/>
            <person name="Gilna P."/>
            <person name="Schmutz J."/>
            <person name="Larimer F."/>
            <person name="Land M."/>
            <person name="Hauser L."/>
            <person name="Kyrpides N."/>
            <person name="Mikhailova N."/>
            <person name="Fredrickson J."/>
            <person name="Richardson P."/>
        </authorList>
    </citation>
    <scope>NUCLEOTIDE SEQUENCE [LARGE SCALE GENOMIC DNA]</scope>
    <source>
        <strain>ATCC BAA-1098 / SB2B</strain>
    </source>
</reference>
<protein>
    <recommendedName>
        <fullName evidence="1">Ribonuclease P protein component</fullName>
        <shortName evidence="1">RNase P protein</shortName>
        <shortName evidence="1">RNaseP protein</shortName>
        <ecNumber evidence="1">3.1.26.5</ecNumber>
    </recommendedName>
    <alternativeName>
        <fullName evidence="1">Protein C5</fullName>
    </alternativeName>
</protein>